<comment type="similarity">
    <text evidence="1">Belongs to the bacterial ribosomal protein bS21 family.</text>
</comment>
<accession>Q9PQL4</accession>
<feature type="chain" id="PRO_0000178398" description="Small ribosomal subunit protein bS21">
    <location>
        <begin position="1"/>
        <end position="55"/>
    </location>
</feature>
<name>RS21_UREPA</name>
<organism>
    <name type="scientific">Ureaplasma parvum serovar 3 (strain ATCC 700970)</name>
    <dbReference type="NCBI Taxonomy" id="273119"/>
    <lineage>
        <taxon>Bacteria</taxon>
        <taxon>Bacillati</taxon>
        <taxon>Mycoplasmatota</taxon>
        <taxon>Mycoplasmoidales</taxon>
        <taxon>Mycoplasmoidaceae</taxon>
        <taxon>Ureaplasma</taxon>
    </lineage>
</organism>
<dbReference type="EMBL" id="AF222894">
    <property type="protein sequence ID" value="AAF30686.1"/>
    <property type="molecule type" value="Genomic_DNA"/>
</dbReference>
<dbReference type="RefSeq" id="WP_006688933.1">
    <property type="nucleotide sequence ID" value="NC_002162.1"/>
</dbReference>
<dbReference type="SMR" id="Q9PQL4"/>
<dbReference type="STRING" id="273119.UU277"/>
<dbReference type="EnsemblBacteria" id="AAF30686">
    <property type="protein sequence ID" value="AAF30686"/>
    <property type="gene ID" value="UU277"/>
</dbReference>
<dbReference type="GeneID" id="29672551"/>
<dbReference type="KEGG" id="uur:UU277"/>
<dbReference type="HOGENOM" id="CLU_207223_1_0_14"/>
<dbReference type="OrthoDB" id="404044at2"/>
<dbReference type="Proteomes" id="UP000000423">
    <property type="component" value="Chromosome"/>
</dbReference>
<dbReference type="GO" id="GO:1990904">
    <property type="term" value="C:ribonucleoprotein complex"/>
    <property type="evidence" value="ECO:0007669"/>
    <property type="project" value="UniProtKB-KW"/>
</dbReference>
<dbReference type="GO" id="GO:0005840">
    <property type="term" value="C:ribosome"/>
    <property type="evidence" value="ECO:0007669"/>
    <property type="project" value="UniProtKB-KW"/>
</dbReference>
<dbReference type="GO" id="GO:0003735">
    <property type="term" value="F:structural constituent of ribosome"/>
    <property type="evidence" value="ECO:0007669"/>
    <property type="project" value="InterPro"/>
</dbReference>
<dbReference type="GO" id="GO:0006412">
    <property type="term" value="P:translation"/>
    <property type="evidence" value="ECO:0007669"/>
    <property type="project" value="UniProtKB-UniRule"/>
</dbReference>
<dbReference type="HAMAP" id="MF_00358">
    <property type="entry name" value="Ribosomal_bS21"/>
    <property type="match status" value="1"/>
</dbReference>
<dbReference type="InterPro" id="IPR001911">
    <property type="entry name" value="Ribosomal_bS21"/>
</dbReference>
<dbReference type="NCBIfam" id="TIGR00030">
    <property type="entry name" value="S21p"/>
    <property type="match status" value="1"/>
</dbReference>
<dbReference type="Pfam" id="PF01165">
    <property type="entry name" value="Ribosomal_S21"/>
    <property type="match status" value="1"/>
</dbReference>
<reference key="1">
    <citation type="journal article" date="2000" name="Nature">
        <title>The complete sequence of the mucosal pathogen Ureaplasma urealyticum.</title>
        <authorList>
            <person name="Glass J.I."/>
            <person name="Lefkowitz E.J."/>
            <person name="Glass J.S."/>
            <person name="Heiner C.R."/>
            <person name="Chen E.Y."/>
            <person name="Cassell G.H."/>
        </authorList>
    </citation>
    <scope>NUCLEOTIDE SEQUENCE [LARGE SCALE GENOMIC DNA]</scope>
    <source>
        <strain>ATCC 700970</strain>
    </source>
</reference>
<evidence type="ECO:0000305" key="1"/>
<gene>
    <name type="primary">rpsU</name>
    <name type="synonym">rps21</name>
    <name type="ordered locus">UU277</name>
</gene>
<proteinExistence type="inferred from homology"/>
<sequence>MSRGVSVEGDLEKALKKFKRISNETKKDSKRHEYYLSPRIRRKEKIKEANKYRSF</sequence>
<keyword id="KW-1185">Reference proteome</keyword>
<keyword id="KW-0687">Ribonucleoprotein</keyword>
<keyword id="KW-0689">Ribosomal protein</keyword>
<protein>
    <recommendedName>
        <fullName evidence="1">Small ribosomal subunit protein bS21</fullName>
    </recommendedName>
    <alternativeName>
        <fullName>30S ribosomal protein S21</fullName>
    </alternativeName>
</protein>